<gene>
    <name type="primary">D11DS</name>
    <name type="synonym">PGD11DS</name>
</gene>
<protein>
    <recommendedName>
        <fullName>Acyl-CoA Delta(11) desaturase</fullName>
        <ecNumber evidence="3">1.14.19.5</ecNumber>
    </recommendedName>
    <alternativeName>
        <fullName>Acyl-CoA Delta-11 desaturase</fullName>
        <shortName>Delta(11)-desaturase</shortName>
    </alternativeName>
</protein>
<proteinExistence type="evidence at protein level"/>
<accession>O44390</accession>
<accession>Q9BKA3</accession>
<accession>Q9BKA4</accession>
<feature type="chain" id="PRO_0000185410" description="Acyl-CoA Delta(11) desaturase">
    <location>
        <begin position="1"/>
        <end position="349"/>
    </location>
</feature>
<feature type="transmembrane region" description="Helical" evidence="2">
    <location>
        <begin position="41"/>
        <end position="61"/>
    </location>
</feature>
<feature type="transmembrane region" description="Helical" evidence="2">
    <location>
        <begin position="66"/>
        <end position="86"/>
    </location>
</feature>
<feature type="transmembrane region" description="Helical" evidence="2">
    <location>
        <begin position="184"/>
        <end position="204"/>
    </location>
</feature>
<feature type="transmembrane region" description="Helical" evidence="2">
    <location>
        <begin position="282"/>
        <end position="302"/>
    </location>
</feature>
<feature type="short sequence motif" description="Histidine box-1">
    <location>
        <begin position="86"/>
        <end position="91"/>
    </location>
</feature>
<feature type="short sequence motif" description="Histidine box-2">
    <location>
        <begin position="123"/>
        <end position="127"/>
    </location>
</feature>
<feature type="short sequence motif" description="Histidine box-3">
    <location>
        <begin position="263"/>
        <end position="267"/>
    </location>
</feature>
<feature type="sequence conflict" description="In Ref. 2; AAK21863." evidence="4" ref="2">
    <original>V</original>
    <variation>M</variation>
    <location>
        <position position="22"/>
    </location>
</feature>
<feature type="sequence conflict" description="In Ref. 2; AAK21863." evidence="4" ref="2">
    <original>A</original>
    <variation>V</variation>
    <location>
        <position position="116"/>
    </location>
</feature>
<feature type="sequence conflict" description="In Ref. 2; AAK21863." evidence="4" ref="2">
    <original>LHHKYSDTDAD</original>
    <variation>YITNTAILMLI</variation>
    <location>
        <begin position="125"/>
        <end position="135"/>
    </location>
</feature>
<feature type="sequence conflict" description="In Ref. 2; AAK21864." evidence="4" ref="2">
    <original>A</original>
    <variation>T</variation>
    <location>
        <position position="257"/>
    </location>
</feature>
<comment type="function">
    <text evidence="3">Catalyzes the formation of Delta(11) fatty acyl precursors in the pheromone gland.</text>
</comment>
<comment type="catalytic activity">
    <reaction evidence="3">
        <text>an 11,12-saturated fatty acyl-CoA + 2 Fe(II)-[cytochrome b5] + O2 + 2 H(+) = an (11Z)-Delta(11)-fatty acyl-CoA + 2 Fe(III)-[cytochrome b5] + 2 H2O</text>
        <dbReference type="Rhea" id="RHEA:25852"/>
        <dbReference type="Rhea" id="RHEA-COMP:10438"/>
        <dbReference type="Rhea" id="RHEA-COMP:10439"/>
        <dbReference type="ChEBI" id="CHEBI:15377"/>
        <dbReference type="ChEBI" id="CHEBI:15378"/>
        <dbReference type="ChEBI" id="CHEBI:15379"/>
        <dbReference type="ChEBI" id="CHEBI:29033"/>
        <dbReference type="ChEBI" id="CHEBI:29034"/>
        <dbReference type="ChEBI" id="CHEBI:84947"/>
        <dbReference type="ChEBI" id="CHEBI:84948"/>
        <dbReference type="EC" id="1.14.19.5"/>
    </reaction>
</comment>
<comment type="cofactor">
    <cofactor evidence="1">
        <name>Fe cation</name>
        <dbReference type="ChEBI" id="CHEBI:24875"/>
    </cofactor>
</comment>
<comment type="subcellular location">
    <subcellularLocation>
        <location evidence="1">Endoplasmic reticulum membrane</location>
        <topology evidence="1">Multi-pass membrane protein</topology>
    </subcellularLocation>
</comment>
<comment type="tissue specificity">
    <text evidence="3">Adult female pheromone gland. Increases by two or three orders of magnitude during the first 2 days after adult eclosion.</text>
</comment>
<comment type="domain">
    <text evidence="1">The histidine box domains may contain the active site and/or be involved in metal ion binding.</text>
</comment>
<comment type="similarity">
    <text evidence="4">Belongs to the fatty acid desaturase type 1 family.</text>
</comment>
<sequence length="349" mass="40243">MAVMAQTVQETATVLEEEARTVTLVAPKTTPRKYKYIYTNFLTFSYAHLAALYGLYLCFTSAKWETLLFSFVLFHMSNIGITAGAHRLWTHKTFKAKLPLEIVLMIFNSLAFQNTAITWAREHRLHHKYSDTDADPHNASRGFFYSHVGWLLVKKHPDVLKYGKTIDMSDVYNNPVLKFQKKYAVPLIGTVCFALPTLIPVYCWGESWNNAWHIALFRYIFNLNVTFLVNSAAHIWGNKPYDKSILPAQNLLVSFLASGEGFHNYHHVFPWDYRTAELGNNFLNLTTLFIDFCAWFGWAYDLKSVSEDIIKQRAKRTGDGSSGVIWGWDDKDMDRDIKSKANIFYAKKE</sequence>
<reference key="1">
    <citation type="journal article" date="1998" name="Proc. Natl. Acad. Sci. U.S.A.">
        <title>Cloning and functional expression of a cDNA encoding a pheromone gland-specific acyl-CoA delta11-desaturase of the cabbage looper moth, Trichoplusia ni.</title>
        <authorList>
            <person name="Knipple D.C."/>
            <person name="Rosenfield C.-L."/>
            <person name="Miller S.J."/>
            <person name="Liu W."/>
            <person name="Tang J."/>
            <person name="Ma P.W.K."/>
            <person name="Roelofs W.L."/>
        </authorList>
    </citation>
    <scope>NUCLEOTIDE SEQUENCE [MRNA]</scope>
    <scope>CATALYTIC ACTIVITY</scope>
    <scope>FUNCTION</scope>
    <scope>TISSUE SPECIFICITY</scope>
    <source>
        <tissue>Pheromone gland</tissue>
    </source>
</reference>
<reference key="2">
    <citation type="journal article" date="2001" name="Insect Biochem. Mol. Biol.">
        <title>Structural and functional conservation and divergence among acyl-CoA desaturases of two noctuid species, the corn earworm, Helicoverpa zea, and the cabbage looper, Trichoplusia ni.</title>
        <authorList>
            <person name="Rosenfield C.-L."/>
            <person name="You K.M."/>
            <person name="Marsella-Herrick P."/>
            <person name="Roelofs W.L."/>
            <person name="Knipple D.C."/>
        </authorList>
    </citation>
    <scope>NUCLEOTIDE SEQUENCE [GENOMIC DNA] OF 18-259</scope>
</reference>
<organism>
    <name type="scientific">Trichoplusia ni</name>
    <name type="common">Cabbage looper</name>
    <dbReference type="NCBI Taxonomy" id="7111"/>
    <lineage>
        <taxon>Eukaryota</taxon>
        <taxon>Metazoa</taxon>
        <taxon>Ecdysozoa</taxon>
        <taxon>Arthropoda</taxon>
        <taxon>Hexapoda</taxon>
        <taxon>Insecta</taxon>
        <taxon>Pterygota</taxon>
        <taxon>Neoptera</taxon>
        <taxon>Endopterygota</taxon>
        <taxon>Lepidoptera</taxon>
        <taxon>Glossata</taxon>
        <taxon>Ditrysia</taxon>
        <taxon>Noctuoidea</taxon>
        <taxon>Noctuidae</taxon>
        <taxon>Plusiinae</taxon>
        <taxon>Trichoplusia</taxon>
    </lineage>
</organism>
<evidence type="ECO:0000250" key="1"/>
<evidence type="ECO:0000255" key="2"/>
<evidence type="ECO:0000269" key="3">
    <source>
    </source>
</evidence>
<evidence type="ECO:0000305" key="4"/>
<name>ACO11_TRINI</name>
<keyword id="KW-0256">Endoplasmic reticulum</keyword>
<keyword id="KW-0275">Fatty acid biosynthesis</keyword>
<keyword id="KW-0276">Fatty acid metabolism</keyword>
<keyword id="KW-0408">Iron</keyword>
<keyword id="KW-0444">Lipid biosynthesis</keyword>
<keyword id="KW-0443">Lipid metabolism</keyword>
<keyword id="KW-0472">Membrane</keyword>
<keyword id="KW-0479">Metal-binding</keyword>
<keyword id="KW-0560">Oxidoreductase</keyword>
<keyword id="KW-1185">Reference proteome</keyword>
<keyword id="KW-0812">Transmembrane</keyword>
<keyword id="KW-1133">Transmembrane helix</keyword>
<dbReference type="EC" id="1.14.19.5" evidence="3"/>
<dbReference type="EMBL" id="AF035375">
    <property type="protein sequence ID" value="AAD03775.1"/>
    <property type="molecule type" value="mRNA"/>
</dbReference>
<dbReference type="EMBL" id="AF297114">
    <property type="protein sequence ID" value="AAK21864.1"/>
    <property type="molecule type" value="Genomic_DNA"/>
</dbReference>
<dbReference type="EMBL" id="AF297113">
    <property type="protein sequence ID" value="AAK21863.1"/>
    <property type="molecule type" value="Genomic_DNA"/>
</dbReference>
<dbReference type="SMR" id="O44390"/>
<dbReference type="InParanoid" id="O44390"/>
<dbReference type="BioCyc" id="MetaCyc:MONOMER-18385"/>
<dbReference type="BRENDA" id="1.14.19.5">
    <property type="organism ID" value="6461"/>
</dbReference>
<dbReference type="Proteomes" id="UP000322000">
    <property type="component" value="Unplaced"/>
</dbReference>
<dbReference type="GO" id="GO:0005789">
    <property type="term" value="C:endoplasmic reticulum membrane"/>
    <property type="evidence" value="ECO:0007669"/>
    <property type="project" value="UniProtKB-SubCell"/>
</dbReference>
<dbReference type="GO" id="GO:0017105">
    <property type="term" value="F:acyl-CoA 11-(Z)-desaturase activity"/>
    <property type="evidence" value="ECO:0007669"/>
    <property type="project" value="UniProtKB-EC"/>
</dbReference>
<dbReference type="GO" id="GO:0005506">
    <property type="term" value="F:iron ion binding"/>
    <property type="evidence" value="ECO:0007669"/>
    <property type="project" value="TreeGrafter"/>
</dbReference>
<dbReference type="GO" id="GO:0004768">
    <property type="term" value="F:stearoyl-CoA 9-desaturase activity"/>
    <property type="evidence" value="ECO:0007669"/>
    <property type="project" value="TreeGrafter"/>
</dbReference>
<dbReference type="GO" id="GO:0006636">
    <property type="term" value="P:unsaturated fatty acid biosynthetic process"/>
    <property type="evidence" value="ECO:0007669"/>
    <property type="project" value="TreeGrafter"/>
</dbReference>
<dbReference type="CDD" id="cd03505">
    <property type="entry name" value="Delta9-FADS-like"/>
    <property type="match status" value="1"/>
</dbReference>
<dbReference type="InterPro" id="IPR015876">
    <property type="entry name" value="Acyl-CoA_DS"/>
</dbReference>
<dbReference type="InterPro" id="IPR005804">
    <property type="entry name" value="FA_desaturase_dom"/>
</dbReference>
<dbReference type="InterPro" id="IPR001522">
    <property type="entry name" value="FADS-1_CS"/>
</dbReference>
<dbReference type="PANTHER" id="PTHR11351">
    <property type="entry name" value="ACYL-COA DESATURASE"/>
    <property type="match status" value="1"/>
</dbReference>
<dbReference type="PANTHER" id="PTHR11351:SF31">
    <property type="entry name" value="DESATURASE 1, ISOFORM A-RELATED"/>
    <property type="match status" value="1"/>
</dbReference>
<dbReference type="Pfam" id="PF00487">
    <property type="entry name" value="FA_desaturase"/>
    <property type="match status" value="1"/>
</dbReference>
<dbReference type="PRINTS" id="PR00075">
    <property type="entry name" value="FACDDSATRASE"/>
</dbReference>
<dbReference type="PROSITE" id="PS00476">
    <property type="entry name" value="FATTY_ACID_DESATUR_1"/>
    <property type="match status" value="1"/>
</dbReference>